<organism>
    <name type="scientific">Arabidopsis thaliana</name>
    <name type="common">Mouse-ear cress</name>
    <dbReference type="NCBI Taxonomy" id="3702"/>
    <lineage>
        <taxon>Eukaryota</taxon>
        <taxon>Viridiplantae</taxon>
        <taxon>Streptophyta</taxon>
        <taxon>Embryophyta</taxon>
        <taxon>Tracheophyta</taxon>
        <taxon>Spermatophyta</taxon>
        <taxon>Magnoliopsida</taxon>
        <taxon>eudicotyledons</taxon>
        <taxon>Gunneridae</taxon>
        <taxon>Pentapetalae</taxon>
        <taxon>rosids</taxon>
        <taxon>malvids</taxon>
        <taxon>Brassicales</taxon>
        <taxon>Brassicaceae</taxon>
        <taxon>Camelineae</taxon>
        <taxon>Arabidopsis</taxon>
    </lineage>
</organism>
<keyword id="KW-1185">Reference proteome</keyword>
<sequence>MTLSRVHQQVIAFPAVNTAPVGYLPDPASINKLQIPTSSKVSMLQKKKTDSFTNGARDQDKLGPKLTETVKRKLSLGAKILQMGGLEKIYKRLFKVCDKEKLFKAYQCYLSTTEGSIAGLLFISSKKIAFCSERSIKVTSPQGDLTRVHYKVSIPLCKINGVNQSQNTKKPSQRYLEVVTVDNYDFWFMGFVSYQKAFNCLEKALNEDEQ</sequence>
<name>GEML7_ARATH</name>
<reference key="1">
    <citation type="journal article" date="1997" name="DNA Res.">
        <title>Structural analysis of Arabidopsis thaliana chromosome 5. III. Sequence features of the regions of 1,191,918 bp covered by seventeen physically assigned P1 clones.</title>
        <authorList>
            <person name="Nakamura Y."/>
            <person name="Sato S."/>
            <person name="Kaneko T."/>
            <person name="Kotani H."/>
            <person name="Asamizu E."/>
            <person name="Miyajima N."/>
            <person name="Tabata S."/>
        </authorList>
    </citation>
    <scope>NUCLEOTIDE SEQUENCE [LARGE SCALE GENOMIC DNA]</scope>
    <source>
        <strain>cv. Columbia</strain>
    </source>
</reference>
<reference key="2">
    <citation type="journal article" date="2017" name="Plant J.">
        <title>Araport11: a complete reannotation of the Arabidopsis thaliana reference genome.</title>
        <authorList>
            <person name="Cheng C.Y."/>
            <person name="Krishnakumar V."/>
            <person name="Chan A.P."/>
            <person name="Thibaud-Nissen F."/>
            <person name="Schobel S."/>
            <person name="Town C.D."/>
        </authorList>
    </citation>
    <scope>GENOME REANNOTATION</scope>
    <source>
        <strain>cv. Columbia</strain>
    </source>
</reference>
<reference key="3">
    <citation type="submission" date="2004-01" db="EMBL/GenBank/DDBJ databases">
        <title>Arabidopsis ORF clones.</title>
        <authorList>
            <person name="Cheuk R.F."/>
            <person name="Chen H."/>
            <person name="Kim C.J."/>
            <person name="Shinn P."/>
            <person name="Ecker J.R."/>
        </authorList>
    </citation>
    <scope>NUCLEOTIDE SEQUENCE [LARGE SCALE MRNA]</scope>
    <source>
        <strain>cv. Columbia</strain>
    </source>
</reference>
<dbReference type="EMBL" id="AB007648">
    <property type="protein sequence ID" value="BAB11191.1"/>
    <property type="molecule type" value="Genomic_DNA"/>
</dbReference>
<dbReference type="EMBL" id="CP002688">
    <property type="protein sequence ID" value="AED93155.1"/>
    <property type="molecule type" value="Genomic_DNA"/>
</dbReference>
<dbReference type="EMBL" id="BT010826">
    <property type="protein sequence ID" value="AAR24193.1"/>
    <property type="molecule type" value="mRNA"/>
</dbReference>
<dbReference type="EMBL" id="BT011297">
    <property type="protein sequence ID" value="AAR92333.1"/>
    <property type="molecule type" value="mRNA"/>
</dbReference>
<dbReference type="RefSeq" id="NP_197727.1">
    <property type="nucleotide sequence ID" value="NM_122242.4"/>
</dbReference>
<dbReference type="FunCoup" id="Q9FMW5">
    <property type="interactions" value="83"/>
</dbReference>
<dbReference type="PaxDb" id="3702-AT5G23360.1"/>
<dbReference type="EnsemblPlants" id="AT5G23360.1">
    <property type="protein sequence ID" value="AT5G23360.1"/>
    <property type="gene ID" value="AT5G23360"/>
</dbReference>
<dbReference type="GeneID" id="832400"/>
<dbReference type="Gramene" id="AT5G23360.1">
    <property type="protein sequence ID" value="AT5G23360.1"/>
    <property type="gene ID" value="AT5G23360"/>
</dbReference>
<dbReference type="KEGG" id="ath:AT5G23360"/>
<dbReference type="Araport" id="AT5G23360"/>
<dbReference type="TAIR" id="AT5G23360"/>
<dbReference type="eggNOG" id="ENOG502QUKI">
    <property type="taxonomic scope" value="Eukaryota"/>
</dbReference>
<dbReference type="HOGENOM" id="CLU_063785_0_1_1"/>
<dbReference type="InParanoid" id="Q9FMW5"/>
<dbReference type="OMA" id="YRMNKLS"/>
<dbReference type="PhylomeDB" id="Q9FMW5"/>
<dbReference type="PRO" id="PR:Q9FMW5"/>
<dbReference type="Proteomes" id="UP000006548">
    <property type="component" value="Chromosome 5"/>
</dbReference>
<dbReference type="ExpressionAtlas" id="Q9FMW5">
    <property type="expression patterns" value="baseline and differential"/>
</dbReference>
<dbReference type="Gene3D" id="2.30.29.30">
    <property type="entry name" value="Pleckstrin-homology domain (PH domain)/Phosphotyrosine-binding domain (PTB)"/>
    <property type="match status" value="1"/>
</dbReference>
<dbReference type="InterPro" id="IPR037848">
    <property type="entry name" value="GEM-like"/>
</dbReference>
<dbReference type="InterPro" id="IPR004182">
    <property type="entry name" value="GRAM"/>
</dbReference>
<dbReference type="InterPro" id="IPR011993">
    <property type="entry name" value="PH-like_dom_sf"/>
</dbReference>
<dbReference type="PANTHER" id="PTHR31969">
    <property type="entry name" value="GEM-LIKE PROTEIN 2"/>
    <property type="match status" value="1"/>
</dbReference>
<dbReference type="Pfam" id="PF02893">
    <property type="entry name" value="GRAM"/>
    <property type="match status" value="1"/>
</dbReference>
<dbReference type="SMART" id="SM00568">
    <property type="entry name" value="GRAM"/>
    <property type="match status" value="1"/>
</dbReference>
<proteinExistence type="evidence at transcript level"/>
<comment type="similarity">
    <text evidence="1">Belongs to the GEM family.</text>
</comment>
<gene>
    <name type="ordered locus">At5g23360</name>
    <name type="ORF">MKD15.22</name>
</gene>
<evidence type="ECO:0000305" key="1"/>
<feature type="chain" id="PRO_0000311671" description="GEM-like protein 7">
    <location>
        <begin position="1"/>
        <end position="210"/>
    </location>
</feature>
<feature type="domain" description="GRAM">
    <location>
        <begin position="88"/>
        <end position="166"/>
    </location>
</feature>
<protein>
    <recommendedName>
        <fullName>GEM-like protein 7</fullName>
    </recommendedName>
</protein>
<accession>Q9FMW5</accession>